<sequence>MKKVLLVNGPNLNRLGVREVNVYGKGTLETLETDMKQEAEKLGVGLECFQSNHEGALIDTIHEADGIYEGIILNPGAFTHYSYAIRDAIASISIPVIEVHISNIHQRESFRHESVTAAVCAGQIVGFGFYGYKLALFALLEKLGEA</sequence>
<protein>
    <recommendedName>
        <fullName evidence="1">3-dehydroquinate dehydratase</fullName>
        <shortName evidence="1">3-dehydroquinase</shortName>
        <ecNumber evidence="1">4.2.1.10</ecNumber>
    </recommendedName>
    <alternativeName>
        <fullName evidence="1">Type II DHQase</fullName>
    </alternativeName>
</protein>
<proteinExistence type="inferred from homology"/>
<gene>
    <name evidence="1" type="primary">aroQ</name>
    <name type="ordered locus">Bcer98_2893</name>
</gene>
<dbReference type="EC" id="4.2.1.10" evidence="1"/>
<dbReference type="EMBL" id="CP000764">
    <property type="protein sequence ID" value="ABS23125.1"/>
    <property type="molecule type" value="Genomic_DNA"/>
</dbReference>
<dbReference type="RefSeq" id="WP_012095353.1">
    <property type="nucleotide sequence ID" value="NC_009674.1"/>
</dbReference>
<dbReference type="SMR" id="A7GSL7"/>
<dbReference type="STRING" id="315749.Bcer98_2893"/>
<dbReference type="GeneID" id="33898146"/>
<dbReference type="KEGG" id="bcy:Bcer98_2893"/>
<dbReference type="eggNOG" id="COG0757">
    <property type="taxonomic scope" value="Bacteria"/>
</dbReference>
<dbReference type="HOGENOM" id="CLU_090968_3_0_9"/>
<dbReference type="OrthoDB" id="9790793at2"/>
<dbReference type="UniPathway" id="UPA00053">
    <property type="reaction ID" value="UER00086"/>
</dbReference>
<dbReference type="Proteomes" id="UP000002300">
    <property type="component" value="Chromosome"/>
</dbReference>
<dbReference type="GO" id="GO:0003855">
    <property type="term" value="F:3-dehydroquinate dehydratase activity"/>
    <property type="evidence" value="ECO:0007669"/>
    <property type="project" value="UniProtKB-UniRule"/>
</dbReference>
<dbReference type="GO" id="GO:0008652">
    <property type="term" value="P:amino acid biosynthetic process"/>
    <property type="evidence" value="ECO:0007669"/>
    <property type="project" value="UniProtKB-KW"/>
</dbReference>
<dbReference type="GO" id="GO:0009073">
    <property type="term" value="P:aromatic amino acid family biosynthetic process"/>
    <property type="evidence" value="ECO:0007669"/>
    <property type="project" value="UniProtKB-KW"/>
</dbReference>
<dbReference type="GO" id="GO:0009423">
    <property type="term" value="P:chorismate biosynthetic process"/>
    <property type="evidence" value="ECO:0007669"/>
    <property type="project" value="UniProtKB-UniRule"/>
</dbReference>
<dbReference type="GO" id="GO:0019631">
    <property type="term" value="P:quinate catabolic process"/>
    <property type="evidence" value="ECO:0007669"/>
    <property type="project" value="TreeGrafter"/>
</dbReference>
<dbReference type="CDD" id="cd00466">
    <property type="entry name" value="DHQase_II"/>
    <property type="match status" value="1"/>
</dbReference>
<dbReference type="Gene3D" id="3.40.50.9100">
    <property type="entry name" value="Dehydroquinase, class II"/>
    <property type="match status" value="1"/>
</dbReference>
<dbReference type="HAMAP" id="MF_00169">
    <property type="entry name" value="AroQ"/>
    <property type="match status" value="1"/>
</dbReference>
<dbReference type="InterPro" id="IPR001874">
    <property type="entry name" value="DHquinase_II"/>
</dbReference>
<dbReference type="InterPro" id="IPR018509">
    <property type="entry name" value="DHquinase_II_CS"/>
</dbReference>
<dbReference type="InterPro" id="IPR036441">
    <property type="entry name" value="DHquinase_II_sf"/>
</dbReference>
<dbReference type="NCBIfam" id="TIGR01088">
    <property type="entry name" value="aroQ"/>
    <property type="match status" value="1"/>
</dbReference>
<dbReference type="NCBIfam" id="NF003805">
    <property type="entry name" value="PRK05395.1-2"/>
    <property type="match status" value="1"/>
</dbReference>
<dbReference type="NCBIfam" id="NF003806">
    <property type="entry name" value="PRK05395.1-3"/>
    <property type="match status" value="1"/>
</dbReference>
<dbReference type="NCBIfam" id="NF003807">
    <property type="entry name" value="PRK05395.1-4"/>
    <property type="match status" value="1"/>
</dbReference>
<dbReference type="PANTHER" id="PTHR21272">
    <property type="entry name" value="CATABOLIC 3-DEHYDROQUINASE"/>
    <property type="match status" value="1"/>
</dbReference>
<dbReference type="PANTHER" id="PTHR21272:SF3">
    <property type="entry name" value="CATABOLIC 3-DEHYDROQUINASE"/>
    <property type="match status" value="1"/>
</dbReference>
<dbReference type="Pfam" id="PF01220">
    <property type="entry name" value="DHquinase_II"/>
    <property type="match status" value="1"/>
</dbReference>
<dbReference type="PIRSF" id="PIRSF001399">
    <property type="entry name" value="DHquinase_II"/>
    <property type="match status" value="1"/>
</dbReference>
<dbReference type="SUPFAM" id="SSF52304">
    <property type="entry name" value="Type II 3-dehydroquinate dehydratase"/>
    <property type="match status" value="1"/>
</dbReference>
<dbReference type="PROSITE" id="PS01029">
    <property type="entry name" value="DEHYDROQUINASE_II"/>
    <property type="match status" value="1"/>
</dbReference>
<name>AROQ_BACCN</name>
<keyword id="KW-0028">Amino-acid biosynthesis</keyword>
<keyword id="KW-0057">Aromatic amino acid biosynthesis</keyword>
<keyword id="KW-0456">Lyase</keyword>
<comment type="function">
    <text evidence="1">Catalyzes a trans-dehydration via an enolate intermediate.</text>
</comment>
<comment type="catalytic activity">
    <reaction evidence="1">
        <text>3-dehydroquinate = 3-dehydroshikimate + H2O</text>
        <dbReference type="Rhea" id="RHEA:21096"/>
        <dbReference type="ChEBI" id="CHEBI:15377"/>
        <dbReference type="ChEBI" id="CHEBI:16630"/>
        <dbReference type="ChEBI" id="CHEBI:32364"/>
        <dbReference type="EC" id="4.2.1.10"/>
    </reaction>
</comment>
<comment type="pathway">
    <text evidence="1">Metabolic intermediate biosynthesis; chorismate biosynthesis; chorismate from D-erythrose 4-phosphate and phosphoenolpyruvate: step 3/7.</text>
</comment>
<comment type="subunit">
    <text evidence="1">Homododecamer.</text>
</comment>
<comment type="similarity">
    <text evidence="1">Belongs to the type-II 3-dehydroquinase family.</text>
</comment>
<reference key="1">
    <citation type="journal article" date="2008" name="Chem. Biol. Interact.">
        <title>Extending the Bacillus cereus group genomics to putative food-borne pathogens of different toxicity.</title>
        <authorList>
            <person name="Lapidus A."/>
            <person name="Goltsman E."/>
            <person name="Auger S."/>
            <person name="Galleron N."/>
            <person name="Segurens B."/>
            <person name="Dossat C."/>
            <person name="Land M.L."/>
            <person name="Broussolle V."/>
            <person name="Brillard J."/>
            <person name="Guinebretiere M.-H."/>
            <person name="Sanchis V."/>
            <person name="Nguen-the C."/>
            <person name="Lereclus D."/>
            <person name="Richardson P."/>
            <person name="Wincker P."/>
            <person name="Weissenbach J."/>
            <person name="Ehrlich S.D."/>
            <person name="Sorokin A."/>
        </authorList>
    </citation>
    <scope>NUCLEOTIDE SEQUENCE [LARGE SCALE GENOMIC DNA]</scope>
    <source>
        <strain>DSM 22905 / CIP 110041 / 391-98 / NVH 391-98</strain>
    </source>
</reference>
<evidence type="ECO:0000255" key="1">
    <source>
        <dbReference type="HAMAP-Rule" id="MF_00169"/>
    </source>
</evidence>
<organism>
    <name type="scientific">Bacillus cytotoxicus (strain DSM 22905 / CIP 110041 / 391-98 / NVH 391-98)</name>
    <dbReference type="NCBI Taxonomy" id="315749"/>
    <lineage>
        <taxon>Bacteria</taxon>
        <taxon>Bacillati</taxon>
        <taxon>Bacillota</taxon>
        <taxon>Bacilli</taxon>
        <taxon>Bacillales</taxon>
        <taxon>Bacillaceae</taxon>
        <taxon>Bacillus</taxon>
        <taxon>Bacillus cereus group</taxon>
    </lineage>
</organism>
<feature type="chain" id="PRO_1000077026" description="3-dehydroquinate dehydratase">
    <location>
        <begin position="1"/>
        <end position="146"/>
    </location>
</feature>
<feature type="active site" description="Proton acceptor" evidence="1">
    <location>
        <position position="23"/>
    </location>
</feature>
<feature type="active site" description="Proton donor" evidence="1">
    <location>
        <position position="100"/>
    </location>
</feature>
<feature type="binding site" evidence="1">
    <location>
        <position position="74"/>
    </location>
    <ligand>
        <name>substrate</name>
    </ligand>
</feature>
<feature type="binding site" evidence="1">
    <location>
        <position position="80"/>
    </location>
    <ligand>
        <name>substrate</name>
    </ligand>
</feature>
<feature type="binding site" evidence="1">
    <location>
        <position position="87"/>
    </location>
    <ligand>
        <name>substrate</name>
    </ligand>
</feature>
<feature type="binding site" evidence="1">
    <location>
        <begin position="101"/>
        <end position="102"/>
    </location>
    <ligand>
        <name>substrate</name>
    </ligand>
</feature>
<feature type="binding site" evidence="1">
    <location>
        <position position="111"/>
    </location>
    <ligand>
        <name>substrate</name>
    </ligand>
</feature>
<feature type="site" description="Transition state stabilizer" evidence="1">
    <location>
        <position position="18"/>
    </location>
</feature>
<accession>A7GSL7</accession>